<organism>
    <name type="scientific">Campylobacter jejuni subsp. jejuni serotype O:2 (strain ATCC 700819 / NCTC 11168)</name>
    <dbReference type="NCBI Taxonomy" id="192222"/>
    <lineage>
        <taxon>Bacteria</taxon>
        <taxon>Pseudomonadati</taxon>
        <taxon>Campylobacterota</taxon>
        <taxon>Epsilonproteobacteria</taxon>
        <taxon>Campylobacterales</taxon>
        <taxon>Campylobacteraceae</taxon>
        <taxon>Campylobacter</taxon>
    </lineage>
</organism>
<keyword id="KW-0067">ATP-binding</keyword>
<keyword id="KW-0436">Ligase</keyword>
<keyword id="KW-0460">Magnesium</keyword>
<keyword id="KW-0464">Manganese</keyword>
<keyword id="KW-0479">Metal-binding</keyword>
<keyword id="KW-0547">Nucleotide-binding</keyword>
<keyword id="KW-0658">Purine biosynthesis</keyword>
<keyword id="KW-1185">Reference proteome</keyword>
<protein>
    <recommendedName>
        <fullName evidence="2">Phosphoribosylamine--glycine ligase</fullName>
        <ecNumber evidence="2">6.3.4.13</ecNumber>
    </recommendedName>
    <alternativeName>
        <fullName evidence="2">GARS</fullName>
    </alternativeName>
    <alternativeName>
        <fullName evidence="2">Glycinamide ribonucleotide synthetase</fullName>
    </alternativeName>
    <alternativeName>
        <fullName evidence="2">Phosphoribosylglycinamide synthetase</fullName>
    </alternativeName>
</protein>
<feature type="chain" id="PRO_0000151439" description="Phosphoribosylamine--glycine ligase">
    <location>
        <begin position="1"/>
        <end position="416"/>
    </location>
</feature>
<feature type="domain" description="ATP-grasp" evidence="2">
    <location>
        <begin position="105"/>
        <end position="310"/>
    </location>
</feature>
<feature type="binding site" evidence="2">
    <location>
        <begin position="131"/>
        <end position="192"/>
    </location>
    <ligand>
        <name>ATP</name>
        <dbReference type="ChEBI" id="CHEBI:30616"/>
    </ligand>
</feature>
<feature type="binding site" evidence="2">
    <location>
        <position position="281"/>
    </location>
    <ligand>
        <name>Mg(2+)</name>
        <dbReference type="ChEBI" id="CHEBI:18420"/>
    </ligand>
</feature>
<feature type="binding site" evidence="2">
    <location>
        <position position="283"/>
    </location>
    <ligand>
        <name>Mg(2+)</name>
        <dbReference type="ChEBI" id="CHEBI:18420"/>
    </ligand>
</feature>
<accession>Q9PN47</accession>
<accession>Q0P906</accession>
<reference key="1">
    <citation type="journal article" date="2000" name="Nature">
        <title>The genome sequence of the food-borne pathogen Campylobacter jejuni reveals hypervariable sequences.</title>
        <authorList>
            <person name="Parkhill J."/>
            <person name="Wren B.W."/>
            <person name="Mungall K.L."/>
            <person name="Ketley J.M."/>
            <person name="Churcher C.M."/>
            <person name="Basham D."/>
            <person name="Chillingworth T."/>
            <person name="Davies R.M."/>
            <person name="Feltwell T."/>
            <person name="Holroyd S."/>
            <person name="Jagels K."/>
            <person name="Karlyshev A.V."/>
            <person name="Moule S."/>
            <person name="Pallen M.J."/>
            <person name="Penn C.W."/>
            <person name="Quail M.A."/>
            <person name="Rajandream M.A."/>
            <person name="Rutherford K.M."/>
            <person name="van Vliet A.H.M."/>
            <person name="Whitehead S."/>
            <person name="Barrell B.G."/>
        </authorList>
    </citation>
    <scope>NUCLEOTIDE SEQUENCE [LARGE SCALE GENOMIC DNA]</scope>
    <source>
        <strain>ATCC 700819 / NCTC 11168</strain>
    </source>
</reference>
<gene>
    <name evidence="2" type="primary">purD</name>
    <name type="ordered locus">Cj1250</name>
</gene>
<proteinExistence type="inferred from homology"/>
<comment type="catalytic activity">
    <reaction evidence="2">
        <text>5-phospho-beta-D-ribosylamine + glycine + ATP = N(1)-(5-phospho-beta-D-ribosyl)glycinamide + ADP + phosphate + H(+)</text>
        <dbReference type="Rhea" id="RHEA:17453"/>
        <dbReference type="ChEBI" id="CHEBI:15378"/>
        <dbReference type="ChEBI" id="CHEBI:30616"/>
        <dbReference type="ChEBI" id="CHEBI:43474"/>
        <dbReference type="ChEBI" id="CHEBI:57305"/>
        <dbReference type="ChEBI" id="CHEBI:58681"/>
        <dbReference type="ChEBI" id="CHEBI:143788"/>
        <dbReference type="ChEBI" id="CHEBI:456216"/>
        <dbReference type="EC" id="6.3.4.13"/>
    </reaction>
</comment>
<comment type="cofactor">
    <cofactor evidence="1">
        <name>Mg(2+)</name>
        <dbReference type="ChEBI" id="CHEBI:18420"/>
    </cofactor>
    <cofactor evidence="1">
        <name>Mn(2+)</name>
        <dbReference type="ChEBI" id="CHEBI:29035"/>
    </cofactor>
    <text evidence="1">Binds 1 Mg(2+) or Mn(2+) ion per subunit.</text>
</comment>
<comment type="pathway">
    <text evidence="2">Purine metabolism; IMP biosynthesis via de novo pathway; N(1)-(5-phospho-D-ribosyl)glycinamide from 5-phospho-alpha-D-ribose 1-diphosphate: step 2/2.</text>
</comment>
<comment type="similarity">
    <text evidence="2">Belongs to the GARS family.</text>
</comment>
<dbReference type="EC" id="6.3.4.13" evidence="2"/>
<dbReference type="EMBL" id="AL111168">
    <property type="protein sequence ID" value="CAL35365.1"/>
    <property type="molecule type" value="Genomic_DNA"/>
</dbReference>
<dbReference type="PIR" id="D81332">
    <property type="entry name" value="D81332"/>
</dbReference>
<dbReference type="RefSeq" id="WP_002853212.1">
    <property type="nucleotide sequence ID" value="NZ_SZUC01000001.1"/>
</dbReference>
<dbReference type="RefSeq" id="YP_002344641.1">
    <property type="nucleotide sequence ID" value="NC_002163.1"/>
</dbReference>
<dbReference type="SMR" id="Q9PN47"/>
<dbReference type="IntAct" id="Q9PN47">
    <property type="interactions" value="23"/>
</dbReference>
<dbReference type="STRING" id="192222.Cj1250"/>
<dbReference type="PaxDb" id="192222-Cj1250"/>
<dbReference type="EnsemblBacteria" id="CAL35365">
    <property type="protein sequence ID" value="CAL35365"/>
    <property type="gene ID" value="Cj1250"/>
</dbReference>
<dbReference type="GeneID" id="905541"/>
<dbReference type="KEGG" id="cje:Cj1250"/>
<dbReference type="PATRIC" id="fig|192222.6.peg.1233"/>
<dbReference type="eggNOG" id="COG0151">
    <property type="taxonomic scope" value="Bacteria"/>
</dbReference>
<dbReference type="HOGENOM" id="CLU_027420_3_0_7"/>
<dbReference type="OrthoDB" id="9807240at2"/>
<dbReference type="UniPathway" id="UPA00074">
    <property type="reaction ID" value="UER00125"/>
</dbReference>
<dbReference type="Proteomes" id="UP000000799">
    <property type="component" value="Chromosome"/>
</dbReference>
<dbReference type="GO" id="GO:0005524">
    <property type="term" value="F:ATP binding"/>
    <property type="evidence" value="ECO:0007669"/>
    <property type="project" value="UniProtKB-KW"/>
</dbReference>
<dbReference type="GO" id="GO:0046872">
    <property type="term" value="F:metal ion binding"/>
    <property type="evidence" value="ECO:0007669"/>
    <property type="project" value="UniProtKB-KW"/>
</dbReference>
<dbReference type="GO" id="GO:0004637">
    <property type="term" value="F:phosphoribosylamine-glycine ligase activity"/>
    <property type="evidence" value="ECO:0007669"/>
    <property type="project" value="UniProtKB-UniRule"/>
</dbReference>
<dbReference type="GO" id="GO:0006189">
    <property type="term" value="P:'de novo' IMP biosynthetic process"/>
    <property type="evidence" value="ECO:0007669"/>
    <property type="project" value="UniProtKB-UniRule"/>
</dbReference>
<dbReference type="GO" id="GO:0009113">
    <property type="term" value="P:purine nucleobase biosynthetic process"/>
    <property type="evidence" value="ECO:0007669"/>
    <property type="project" value="InterPro"/>
</dbReference>
<dbReference type="Gene3D" id="3.40.50.20">
    <property type="match status" value="1"/>
</dbReference>
<dbReference type="Gene3D" id="3.30.1490.20">
    <property type="entry name" value="ATP-grasp fold, A domain"/>
    <property type="match status" value="1"/>
</dbReference>
<dbReference type="Gene3D" id="3.30.470.20">
    <property type="entry name" value="ATP-grasp fold, B domain"/>
    <property type="match status" value="1"/>
</dbReference>
<dbReference type="Gene3D" id="3.90.600.10">
    <property type="entry name" value="Phosphoribosylglycinamide synthetase, C-terminal domain"/>
    <property type="match status" value="1"/>
</dbReference>
<dbReference type="HAMAP" id="MF_00138">
    <property type="entry name" value="GARS"/>
    <property type="match status" value="1"/>
</dbReference>
<dbReference type="InterPro" id="IPR011761">
    <property type="entry name" value="ATP-grasp"/>
</dbReference>
<dbReference type="InterPro" id="IPR013815">
    <property type="entry name" value="ATP_grasp_subdomain_1"/>
</dbReference>
<dbReference type="InterPro" id="IPR016185">
    <property type="entry name" value="PreATP-grasp_dom_sf"/>
</dbReference>
<dbReference type="InterPro" id="IPR020561">
    <property type="entry name" value="PRibGlycinamid_synth_ATP-grasp"/>
</dbReference>
<dbReference type="InterPro" id="IPR000115">
    <property type="entry name" value="PRibGlycinamide_synth"/>
</dbReference>
<dbReference type="InterPro" id="IPR020560">
    <property type="entry name" value="PRibGlycinamide_synth_C-dom"/>
</dbReference>
<dbReference type="InterPro" id="IPR037123">
    <property type="entry name" value="PRibGlycinamide_synth_C_sf"/>
</dbReference>
<dbReference type="InterPro" id="IPR020559">
    <property type="entry name" value="PRibGlycinamide_synth_CS"/>
</dbReference>
<dbReference type="InterPro" id="IPR020562">
    <property type="entry name" value="PRibGlycinamide_synth_N"/>
</dbReference>
<dbReference type="InterPro" id="IPR011054">
    <property type="entry name" value="Rudment_hybrid_motif"/>
</dbReference>
<dbReference type="NCBIfam" id="TIGR00877">
    <property type="entry name" value="purD"/>
    <property type="match status" value="1"/>
</dbReference>
<dbReference type="PANTHER" id="PTHR43472">
    <property type="entry name" value="PHOSPHORIBOSYLAMINE--GLYCINE LIGASE"/>
    <property type="match status" value="1"/>
</dbReference>
<dbReference type="PANTHER" id="PTHR43472:SF1">
    <property type="entry name" value="PHOSPHORIBOSYLAMINE--GLYCINE LIGASE, CHLOROPLASTIC"/>
    <property type="match status" value="1"/>
</dbReference>
<dbReference type="Pfam" id="PF01071">
    <property type="entry name" value="GARS_A"/>
    <property type="match status" value="1"/>
</dbReference>
<dbReference type="Pfam" id="PF02843">
    <property type="entry name" value="GARS_C"/>
    <property type="match status" value="1"/>
</dbReference>
<dbReference type="Pfam" id="PF02844">
    <property type="entry name" value="GARS_N"/>
    <property type="match status" value="1"/>
</dbReference>
<dbReference type="SMART" id="SM01209">
    <property type="entry name" value="GARS_A"/>
    <property type="match status" value="1"/>
</dbReference>
<dbReference type="SMART" id="SM01210">
    <property type="entry name" value="GARS_C"/>
    <property type="match status" value="1"/>
</dbReference>
<dbReference type="SUPFAM" id="SSF56059">
    <property type="entry name" value="Glutathione synthetase ATP-binding domain-like"/>
    <property type="match status" value="1"/>
</dbReference>
<dbReference type="SUPFAM" id="SSF52440">
    <property type="entry name" value="PreATP-grasp domain"/>
    <property type="match status" value="1"/>
</dbReference>
<dbReference type="SUPFAM" id="SSF51246">
    <property type="entry name" value="Rudiment single hybrid motif"/>
    <property type="match status" value="1"/>
</dbReference>
<dbReference type="PROSITE" id="PS50975">
    <property type="entry name" value="ATP_GRASP"/>
    <property type="match status" value="1"/>
</dbReference>
<dbReference type="PROSITE" id="PS00184">
    <property type="entry name" value="GARS"/>
    <property type="match status" value="1"/>
</dbReference>
<evidence type="ECO:0000250" key="1"/>
<evidence type="ECO:0000255" key="2">
    <source>
        <dbReference type="HAMAP-Rule" id="MF_00138"/>
    </source>
</evidence>
<sequence length="416" mass="45316">MKIMILGSGAREYSIALALRRVDKNLEFYFAPGNGATESLGTNLNLKDPVVLATYAKEKGFDLCIVGSESFLAEGVVDIFKQQGLAIFGPSKAAAMLETSKSFMKSFLKKYRIKTAKFLNTNDIEKAKNFIYSLTPPIVVKADGLCAGKGVIIAKTHEEAIEETAKMLSGESFGDAGKLVVIEEFLDGYELSIFAVCDGNDFVLLPAAQDHKKLLDNDQGPNTGGMGAYAPSSLANESLLRKVQKDIILPTLAGMKKEGAEFCGVLFIGAMIVGNKPYVLEFNVRFGDPECEVLMPLIEDPLELILAATQRRLRHSKIKIKKEFAVGVVCASENYPYKSSPKSEITVNNIPENSHISYAGVSLEDGKLMADGGRVLVCVGTGKSIEEAQKNAYKLCDNVNFKGKQYRKDIAHQVLK</sequence>
<name>PUR2_CAMJE</name>